<evidence type="ECO:0000255" key="1">
    <source>
        <dbReference type="HAMAP-Rule" id="MF_00412"/>
    </source>
</evidence>
<protein>
    <recommendedName>
        <fullName evidence="1">Gamma-glutamyl phosphate reductase</fullName>
        <shortName evidence="1">GPR</shortName>
        <ecNumber evidence="1">1.2.1.41</ecNumber>
    </recommendedName>
    <alternativeName>
        <fullName evidence="1">Glutamate-5-semialdehyde dehydrogenase</fullName>
    </alternativeName>
    <alternativeName>
        <fullName evidence="1">Glutamyl-gamma-semialdehyde dehydrogenase</fullName>
        <shortName evidence="1">GSA dehydrogenase</shortName>
    </alternativeName>
</protein>
<keyword id="KW-0028">Amino-acid biosynthesis</keyword>
<keyword id="KW-0963">Cytoplasm</keyword>
<keyword id="KW-0521">NADP</keyword>
<keyword id="KW-0560">Oxidoreductase</keyword>
<keyword id="KW-0641">Proline biosynthesis</keyword>
<keyword id="KW-1185">Reference proteome</keyword>
<comment type="function">
    <text evidence="1">Catalyzes the NADPH-dependent reduction of L-glutamate 5-phosphate into L-glutamate 5-semialdehyde and phosphate. The product spontaneously undergoes cyclization to form 1-pyrroline-5-carboxylate.</text>
</comment>
<comment type="catalytic activity">
    <reaction evidence="1">
        <text>L-glutamate 5-semialdehyde + phosphate + NADP(+) = L-glutamyl 5-phosphate + NADPH + H(+)</text>
        <dbReference type="Rhea" id="RHEA:19541"/>
        <dbReference type="ChEBI" id="CHEBI:15378"/>
        <dbReference type="ChEBI" id="CHEBI:43474"/>
        <dbReference type="ChEBI" id="CHEBI:57783"/>
        <dbReference type="ChEBI" id="CHEBI:58066"/>
        <dbReference type="ChEBI" id="CHEBI:58274"/>
        <dbReference type="ChEBI" id="CHEBI:58349"/>
        <dbReference type="EC" id="1.2.1.41"/>
    </reaction>
</comment>
<comment type="pathway">
    <text evidence="1">Amino-acid biosynthesis; L-proline biosynthesis; L-glutamate 5-semialdehyde from L-glutamate: step 2/2.</text>
</comment>
<comment type="subcellular location">
    <subcellularLocation>
        <location evidence="1">Cytoplasm</location>
    </subcellularLocation>
</comment>
<comment type="similarity">
    <text evidence="1">Belongs to the gamma-glutamyl phosphate reductase family.</text>
</comment>
<feature type="chain" id="PRO_1000049950" description="Gamma-glutamyl phosphate reductase">
    <location>
        <begin position="1"/>
        <end position="417"/>
    </location>
</feature>
<organism>
    <name type="scientific">Cronobacter sakazakii (strain ATCC BAA-894)</name>
    <name type="common">Enterobacter sakazakii</name>
    <dbReference type="NCBI Taxonomy" id="290339"/>
    <lineage>
        <taxon>Bacteria</taxon>
        <taxon>Pseudomonadati</taxon>
        <taxon>Pseudomonadota</taxon>
        <taxon>Gammaproteobacteria</taxon>
        <taxon>Enterobacterales</taxon>
        <taxon>Enterobacteriaceae</taxon>
        <taxon>Cronobacter</taxon>
    </lineage>
</organism>
<proteinExistence type="inferred from homology"/>
<dbReference type="EC" id="1.2.1.41" evidence="1"/>
<dbReference type="EMBL" id="CP000783">
    <property type="protein sequence ID" value="ABU78337.1"/>
    <property type="molecule type" value="Genomic_DNA"/>
</dbReference>
<dbReference type="RefSeq" id="WP_012125682.1">
    <property type="nucleotide sequence ID" value="NC_009778.1"/>
</dbReference>
<dbReference type="SMR" id="A7MI49"/>
<dbReference type="KEGG" id="esa:ESA_03109"/>
<dbReference type="PATRIC" id="fig|290339.8.peg.2748"/>
<dbReference type="HOGENOM" id="CLU_030231_0_0_6"/>
<dbReference type="UniPathway" id="UPA00098">
    <property type="reaction ID" value="UER00360"/>
</dbReference>
<dbReference type="Proteomes" id="UP000000260">
    <property type="component" value="Chromosome"/>
</dbReference>
<dbReference type="GO" id="GO:0005737">
    <property type="term" value="C:cytoplasm"/>
    <property type="evidence" value="ECO:0007669"/>
    <property type="project" value="UniProtKB-SubCell"/>
</dbReference>
<dbReference type="GO" id="GO:0004350">
    <property type="term" value="F:glutamate-5-semialdehyde dehydrogenase activity"/>
    <property type="evidence" value="ECO:0007669"/>
    <property type="project" value="UniProtKB-UniRule"/>
</dbReference>
<dbReference type="GO" id="GO:0050661">
    <property type="term" value="F:NADP binding"/>
    <property type="evidence" value="ECO:0007669"/>
    <property type="project" value="InterPro"/>
</dbReference>
<dbReference type="GO" id="GO:0055129">
    <property type="term" value="P:L-proline biosynthetic process"/>
    <property type="evidence" value="ECO:0007669"/>
    <property type="project" value="UniProtKB-UniRule"/>
</dbReference>
<dbReference type="CDD" id="cd07079">
    <property type="entry name" value="ALDH_F18-19_ProA-GPR"/>
    <property type="match status" value="1"/>
</dbReference>
<dbReference type="FunFam" id="3.40.309.10:FF:000006">
    <property type="entry name" value="Gamma-glutamyl phosphate reductase"/>
    <property type="match status" value="1"/>
</dbReference>
<dbReference type="Gene3D" id="3.40.605.10">
    <property type="entry name" value="Aldehyde Dehydrogenase, Chain A, domain 1"/>
    <property type="match status" value="1"/>
</dbReference>
<dbReference type="Gene3D" id="3.40.309.10">
    <property type="entry name" value="Aldehyde Dehydrogenase, Chain A, domain 2"/>
    <property type="match status" value="1"/>
</dbReference>
<dbReference type="HAMAP" id="MF_00412">
    <property type="entry name" value="ProA"/>
    <property type="match status" value="1"/>
</dbReference>
<dbReference type="InterPro" id="IPR016161">
    <property type="entry name" value="Ald_DH/histidinol_DH"/>
</dbReference>
<dbReference type="InterPro" id="IPR016163">
    <property type="entry name" value="Ald_DH_C"/>
</dbReference>
<dbReference type="InterPro" id="IPR016162">
    <property type="entry name" value="Ald_DH_N"/>
</dbReference>
<dbReference type="InterPro" id="IPR015590">
    <property type="entry name" value="Aldehyde_DH_dom"/>
</dbReference>
<dbReference type="InterPro" id="IPR020593">
    <property type="entry name" value="G-glutamylP_reductase_CS"/>
</dbReference>
<dbReference type="InterPro" id="IPR012134">
    <property type="entry name" value="Glu-5-SA_DH"/>
</dbReference>
<dbReference type="InterPro" id="IPR000965">
    <property type="entry name" value="GPR_dom"/>
</dbReference>
<dbReference type="NCBIfam" id="NF001221">
    <property type="entry name" value="PRK00197.1"/>
    <property type="match status" value="1"/>
</dbReference>
<dbReference type="NCBIfam" id="TIGR00407">
    <property type="entry name" value="proA"/>
    <property type="match status" value="1"/>
</dbReference>
<dbReference type="PANTHER" id="PTHR11063:SF8">
    <property type="entry name" value="DELTA-1-PYRROLINE-5-CARBOXYLATE SYNTHASE"/>
    <property type="match status" value="1"/>
</dbReference>
<dbReference type="PANTHER" id="PTHR11063">
    <property type="entry name" value="GLUTAMATE SEMIALDEHYDE DEHYDROGENASE"/>
    <property type="match status" value="1"/>
</dbReference>
<dbReference type="Pfam" id="PF00171">
    <property type="entry name" value="Aldedh"/>
    <property type="match status" value="1"/>
</dbReference>
<dbReference type="PIRSF" id="PIRSF000151">
    <property type="entry name" value="GPR"/>
    <property type="match status" value="1"/>
</dbReference>
<dbReference type="SUPFAM" id="SSF53720">
    <property type="entry name" value="ALDH-like"/>
    <property type="match status" value="1"/>
</dbReference>
<dbReference type="PROSITE" id="PS01223">
    <property type="entry name" value="PROA"/>
    <property type="match status" value="1"/>
</dbReference>
<reference key="1">
    <citation type="journal article" date="2010" name="PLoS ONE">
        <title>Genome sequence of Cronobacter sakazakii BAA-894 and comparative genomic hybridization analysis with other Cronobacter species.</title>
        <authorList>
            <person name="Kucerova E."/>
            <person name="Clifton S.W."/>
            <person name="Xia X.Q."/>
            <person name="Long F."/>
            <person name="Porwollik S."/>
            <person name="Fulton L."/>
            <person name="Fronick C."/>
            <person name="Minx P."/>
            <person name="Kyung K."/>
            <person name="Warren W."/>
            <person name="Fulton R."/>
            <person name="Feng D."/>
            <person name="Wollam A."/>
            <person name="Shah N."/>
            <person name="Bhonagiri V."/>
            <person name="Nash W.E."/>
            <person name="Hallsworth-Pepin K."/>
            <person name="Wilson R.K."/>
            <person name="McClelland M."/>
            <person name="Forsythe S.J."/>
        </authorList>
    </citation>
    <scope>NUCLEOTIDE SEQUENCE [LARGE SCALE GENOMIC DNA]</scope>
    <source>
        <strain>ATCC BAA-894</strain>
    </source>
</reference>
<gene>
    <name evidence="1" type="primary">proA</name>
    <name type="ordered locus">ESA_03109</name>
</gene>
<sequence>MLEQMGQAAKAASYQMALLSSREKNRVLEKIADYLEANAEEILLANEQDLLEARRSGLSEALLDRLALNPQRLHAIANDVRQVCQLADPVGQVIDGGLLESGLRIERRRVPLGVVGVIYEARPNVTVDVASLCLKTGNAAILRGGKETWRTNAATVKVIQKALEECGLPAAAVQAIESPDRALVSEMLRMDKYIDMLIPRGGAGLHKLCREQSTIPVITGGIGVCHIFVDETAEFAPALNIITNAKTQRPSTCNTVETLLVHEAIAERFLPELSRAMHERGVTLHADARALALLSGGPATAVAVKPEAFDDEWLSLDLNVKLVAGIDEAIAHIREHGTQHSDAILTRTLRHADRFVNEVDSSAVYVNASTRFTDGGQFGLGAEVAVSTQKLHARGPMGLEALTTYKWIGYGDDTIRA</sequence>
<name>PROA_CROS8</name>
<accession>A7MI49</accession>